<protein>
    <recommendedName>
        <fullName evidence="1">Photosystem II CP47 reaction center protein</fullName>
    </recommendedName>
    <alternativeName>
        <fullName evidence="1">PSII 47 kDa protein</fullName>
    </alternativeName>
    <alternativeName>
        <fullName evidence="1">Protein CP-47</fullName>
    </alternativeName>
</protein>
<evidence type="ECO:0000255" key="1">
    <source>
        <dbReference type="HAMAP-Rule" id="MF_01495"/>
    </source>
</evidence>
<organism>
    <name type="scientific">Trachelium caeruleum</name>
    <name type="common">Blue throatwort</name>
    <dbReference type="NCBI Taxonomy" id="28494"/>
    <lineage>
        <taxon>Eukaryota</taxon>
        <taxon>Viridiplantae</taxon>
        <taxon>Streptophyta</taxon>
        <taxon>Embryophyta</taxon>
        <taxon>Tracheophyta</taxon>
        <taxon>Spermatophyta</taxon>
        <taxon>Magnoliopsida</taxon>
        <taxon>eudicotyledons</taxon>
        <taxon>Gunneridae</taxon>
        <taxon>Pentapetalae</taxon>
        <taxon>asterids</taxon>
        <taxon>campanulids</taxon>
        <taxon>Asterales</taxon>
        <taxon>Campanulaceae</taxon>
        <taxon>Trachelium</taxon>
    </lineage>
</organism>
<proteinExistence type="inferred from homology"/>
<name>PSBB_TRACE</name>
<sequence length="508" mass="56202">MGLPWYRVHTIVLNDPGRLLAVHIMHTALVAGWAGSMALYELAVFDPSDPVLDPMWRQGMFVIPFMTRLGIINSWGGWGITGGTITYPGIWSYEGVAGAHIVFSGLCFLAAIWHWVYWDLEIFTDERTGKPSLDLPKIFGIHLFLAGVACFGFGAFHVTGLYGPGIWVSDPYGLTGKVQYVNPAWGVEGFDPFVPGGIASHHIAAGTLGILAGLFHLSVRPPQRLYKGLRMGNIETVLSSSIAAVFFAAFVVAGTMWYGSATTPIELFGPTRYQWDQGYFQQEIYRRVSTGLAKNQSLSEAWSKIPEKLAFYDYIGNNPAKGGLFRAGSMDNGDGIAVGWLGHPIFRDKEGRELFVRRMPTFFETFPVVLVDGAGIVRADVPFRRAESKYSVEQVGVTVEFYGGELNGVSYNDPATVKKYARRAQLGEIFELDRATLKSDGVFRSSPRGWFTFGHASFALLFFFGHIWHGARTLFRDVFAGIDPDLDAQVEFGAFQKLGDPTTRRQVV</sequence>
<accession>A9QC94</accession>
<comment type="function">
    <text evidence="1">One of the components of the core complex of photosystem II (PSII). It binds chlorophyll and helps catalyze the primary light-induced photochemical processes of PSII. PSII is a light-driven water:plastoquinone oxidoreductase, using light energy to abstract electrons from H(2)O, generating O(2) and a proton gradient subsequently used for ATP formation.</text>
</comment>
<comment type="cofactor">
    <text evidence="1">Binds multiple chlorophylls. PSII binds additional chlorophylls, carotenoids and specific lipids.</text>
</comment>
<comment type="subunit">
    <text evidence="1">PSII is composed of 1 copy each of membrane proteins PsbA, PsbB, PsbC, PsbD, PsbE, PsbF, PsbH, PsbI, PsbJ, PsbK, PsbL, PsbM, PsbT, PsbX, PsbY, PsbZ, Psb30/Ycf12, at least 3 peripheral proteins of the oxygen-evolving complex and a large number of cofactors. It forms dimeric complexes.</text>
</comment>
<comment type="subcellular location">
    <subcellularLocation>
        <location evidence="1">Plastid</location>
        <location evidence="1">Chloroplast thylakoid membrane</location>
        <topology evidence="1">Multi-pass membrane protein</topology>
    </subcellularLocation>
</comment>
<comment type="similarity">
    <text evidence="1">Belongs to the PsbB/PsbC family. PsbB subfamily.</text>
</comment>
<gene>
    <name evidence="1" type="primary">psbB</name>
</gene>
<geneLocation type="chloroplast"/>
<feature type="chain" id="PRO_0000359865" description="Photosystem II CP47 reaction center protein">
    <location>
        <begin position="1"/>
        <end position="508"/>
    </location>
</feature>
<feature type="transmembrane region" description="Helical" evidence="1">
    <location>
        <begin position="21"/>
        <end position="36"/>
    </location>
</feature>
<feature type="transmembrane region" description="Helical" evidence="1">
    <location>
        <begin position="101"/>
        <end position="115"/>
    </location>
</feature>
<feature type="transmembrane region" description="Helical" evidence="1">
    <location>
        <begin position="140"/>
        <end position="156"/>
    </location>
</feature>
<feature type="transmembrane region" description="Helical" evidence="1">
    <location>
        <begin position="203"/>
        <end position="218"/>
    </location>
</feature>
<feature type="transmembrane region" description="Helical" evidence="1">
    <location>
        <begin position="237"/>
        <end position="252"/>
    </location>
</feature>
<feature type="transmembrane region" description="Helical" evidence="1">
    <location>
        <begin position="457"/>
        <end position="472"/>
    </location>
</feature>
<keyword id="KW-0148">Chlorophyll</keyword>
<keyword id="KW-0150">Chloroplast</keyword>
<keyword id="KW-0157">Chromophore</keyword>
<keyword id="KW-0472">Membrane</keyword>
<keyword id="KW-0602">Photosynthesis</keyword>
<keyword id="KW-0604">Photosystem II</keyword>
<keyword id="KW-0934">Plastid</keyword>
<keyword id="KW-0793">Thylakoid</keyword>
<keyword id="KW-0812">Transmembrane</keyword>
<keyword id="KW-1133">Transmembrane helix</keyword>
<reference key="1">
    <citation type="journal article" date="2007" name="Proc. Natl. Acad. Sci. U.S.A.">
        <title>Analysis of 81 genes from 64 plastid genomes resolves relationships in angiosperms and identifies genome-scale evolutionary patterns.</title>
        <authorList>
            <person name="Jansen R.K."/>
            <person name="Cai Z."/>
            <person name="Raubeson L.A."/>
            <person name="Daniell H."/>
            <person name="dePamphilis C.W."/>
            <person name="Leebens-Mack J."/>
            <person name="Muller K.F."/>
            <person name="Guisinger-Bellian M."/>
            <person name="Haberle R.C."/>
            <person name="Hansen A.K."/>
            <person name="Chumley T.W."/>
            <person name="Lee S.B."/>
            <person name="Peery R."/>
            <person name="McNeal J.R."/>
            <person name="Kuehl J.V."/>
            <person name="Boore J.L."/>
        </authorList>
    </citation>
    <scope>NUCLEOTIDE SEQUENCE [GENOMIC DNA]</scope>
</reference>
<reference key="2">
    <citation type="journal article" date="2008" name="J. Mol. Evol.">
        <title>Extensive rearrangements in the chloroplast genome of Trachelium caeruleum are associated with repeats and tRNA genes.</title>
        <authorList>
            <person name="Haberle R.C."/>
            <person name="Fourcade H.M."/>
            <person name="Boore J.L."/>
            <person name="Jansen R.K."/>
        </authorList>
    </citation>
    <scope>NUCLEOTIDE SEQUENCE [LARGE SCALE GENOMIC DNA]</scope>
</reference>
<dbReference type="EMBL" id="EU017280">
    <property type="protein sequence ID" value="ABU85687.1"/>
    <property type="molecule type" value="Genomic_DNA"/>
</dbReference>
<dbReference type="EMBL" id="EU090187">
    <property type="protein sequence ID" value="ABV26486.1"/>
    <property type="molecule type" value="Genomic_DNA"/>
</dbReference>
<dbReference type="RefSeq" id="YP_001718661.1">
    <property type="nucleotide sequence ID" value="NC_010442.1"/>
</dbReference>
<dbReference type="SMR" id="A9QC94"/>
<dbReference type="GeneID" id="6155877"/>
<dbReference type="GO" id="GO:0009535">
    <property type="term" value="C:chloroplast thylakoid membrane"/>
    <property type="evidence" value="ECO:0007669"/>
    <property type="project" value="UniProtKB-SubCell"/>
</dbReference>
<dbReference type="GO" id="GO:0009523">
    <property type="term" value="C:photosystem II"/>
    <property type="evidence" value="ECO:0007669"/>
    <property type="project" value="UniProtKB-KW"/>
</dbReference>
<dbReference type="GO" id="GO:0016168">
    <property type="term" value="F:chlorophyll binding"/>
    <property type="evidence" value="ECO:0007669"/>
    <property type="project" value="UniProtKB-UniRule"/>
</dbReference>
<dbReference type="GO" id="GO:0045156">
    <property type="term" value="F:electron transporter, transferring electrons within the cyclic electron transport pathway of photosynthesis activity"/>
    <property type="evidence" value="ECO:0007669"/>
    <property type="project" value="InterPro"/>
</dbReference>
<dbReference type="GO" id="GO:0009772">
    <property type="term" value="P:photosynthetic electron transport in photosystem II"/>
    <property type="evidence" value="ECO:0007669"/>
    <property type="project" value="InterPro"/>
</dbReference>
<dbReference type="FunFam" id="3.10.680.10:FF:000001">
    <property type="entry name" value="Photosystem II CP47 reaction center protein"/>
    <property type="match status" value="1"/>
</dbReference>
<dbReference type="Gene3D" id="3.10.680.10">
    <property type="entry name" value="Photosystem II CP47 reaction center protein"/>
    <property type="match status" value="1"/>
</dbReference>
<dbReference type="HAMAP" id="MF_01495">
    <property type="entry name" value="PSII_PsbB_CP47"/>
    <property type="match status" value="1"/>
</dbReference>
<dbReference type="InterPro" id="IPR000932">
    <property type="entry name" value="PS_antenna-like"/>
</dbReference>
<dbReference type="InterPro" id="IPR036001">
    <property type="entry name" value="PS_II_antenna-like_sf"/>
</dbReference>
<dbReference type="InterPro" id="IPR017486">
    <property type="entry name" value="PSII_PsbB"/>
</dbReference>
<dbReference type="NCBIfam" id="TIGR03039">
    <property type="entry name" value="PS_II_CP47"/>
    <property type="match status" value="1"/>
</dbReference>
<dbReference type="PANTHER" id="PTHR33180">
    <property type="entry name" value="PHOTOSYSTEM II CP43 REACTION CENTER PROTEIN"/>
    <property type="match status" value="1"/>
</dbReference>
<dbReference type="PANTHER" id="PTHR33180:SF35">
    <property type="entry name" value="PHOTOSYSTEM II CP47 REACTION CENTER PROTEIN"/>
    <property type="match status" value="1"/>
</dbReference>
<dbReference type="Pfam" id="PF00421">
    <property type="entry name" value="PSII"/>
    <property type="match status" value="1"/>
</dbReference>
<dbReference type="SUPFAM" id="SSF161077">
    <property type="entry name" value="Photosystem II antenna protein-like"/>
    <property type="match status" value="1"/>
</dbReference>